<keyword id="KW-0007">Acetylation</keyword>
<keyword id="KW-0028">Amino-acid biosynthesis</keyword>
<keyword id="KW-0150">Chloroplast</keyword>
<keyword id="KW-0368">Histidine biosynthesis</keyword>
<keyword id="KW-0934">Plastid</keyword>
<keyword id="KW-1185">Reference proteome</keyword>
<keyword id="KW-0808">Transferase</keyword>
<keyword id="KW-0809">Transit peptide</keyword>
<accession>Q9S762</accession>
<comment type="function">
    <text>Catalyzes the condensation of ATP and 5-phosphoribose 1-diphosphate to form N'-(5'-phosphoribosyl)-ATP (PR-ATP).</text>
</comment>
<comment type="catalytic activity">
    <reaction evidence="3">
        <text>1-(5-phospho-beta-D-ribosyl)-ATP + diphosphate = 5-phospho-alpha-D-ribose 1-diphosphate + ATP</text>
        <dbReference type="Rhea" id="RHEA:18473"/>
        <dbReference type="ChEBI" id="CHEBI:30616"/>
        <dbReference type="ChEBI" id="CHEBI:33019"/>
        <dbReference type="ChEBI" id="CHEBI:58017"/>
        <dbReference type="ChEBI" id="CHEBI:73183"/>
        <dbReference type="EC" id="2.4.2.17"/>
    </reaction>
</comment>
<comment type="cofactor">
    <cofactor evidence="1">
        <name>Mg(2+)</name>
        <dbReference type="ChEBI" id="CHEBI:18420"/>
    </cofactor>
</comment>
<comment type="activity regulation">
    <text evidence="4">Feedback inhibited by L-histidine.</text>
</comment>
<comment type="biophysicochemical properties">
    <kinetics>
        <KM evidence="3">0.19 uM for 5-phospho-alpha-D-ribose 1-diphosphate</KM>
        <KM evidence="3">0.6 uM for ATP</KM>
    </kinetics>
</comment>
<comment type="pathway">
    <text>Amino-acid biosynthesis; L-histidine biosynthesis; L-histidine from 5-phospho-alpha-D-ribose 1-diphosphate: step 1/9.</text>
</comment>
<comment type="subcellular location">
    <subcellularLocation>
        <location evidence="4">Plastid</location>
        <location evidence="4">Chloroplast</location>
    </subcellularLocation>
</comment>
<comment type="tissue specificity">
    <text evidence="3">Expressed in leaves and at lower levels in roots (at protein level).</text>
</comment>
<comment type="similarity">
    <text evidence="4">Belongs to the ATP phosphoribosyltransferase family. Long subfamily.</text>
</comment>
<dbReference type="EC" id="2.4.2.17"/>
<dbReference type="EMBL" id="AB025249">
    <property type="protein sequence ID" value="BAA89268.1"/>
    <property type="molecule type" value="mRNA"/>
</dbReference>
<dbReference type="EMBL" id="AB025251">
    <property type="protein sequence ID" value="BAA89270.1"/>
    <property type="molecule type" value="Genomic_DNA"/>
</dbReference>
<dbReference type="EMBL" id="AC079604">
    <property type="protein sequence ID" value="AAG50704.1"/>
    <property type="molecule type" value="Genomic_DNA"/>
</dbReference>
<dbReference type="EMBL" id="CP002684">
    <property type="protein sequence ID" value="AEE33495.1"/>
    <property type="molecule type" value="Genomic_DNA"/>
</dbReference>
<dbReference type="EMBL" id="AY093018">
    <property type="protein sequence ID" value="AAM13017.1"/>
    <property type="molecule type" value="mRNA"/>
</dbReference>
<dbReference type="EMBL" id="AY128941">
    <property type="protein sequence ID" value="AAM91341.1"/>
    <property type="molecule type" value="mRNA"/>
</dbReference>
<dbReference type="PIR" id="T51818">
    <property type="entry name" value="T51818"/>
</dbReference>
<dbReference type="SMR" id="Q9S762"/>
<dbReference type="FunCoup" id="Q9S762">
    <property type="interactions" value="697"/>
</dbReference>
<dbReference type="STRING" id="3702.Q9S762"/>
<dbReference type="iPTMnet" id="Q9S762"/>
<dbReference type="MetOSite" id="Q9S762"/>
<dbReference type="PaxDb" id="3702-AT1G58080.1"/>
<dbReference type="ProteomicsDB" id="230132"/>
<dbReference type="EnsemblPlants" id="AT1G58080.1">
    <property type="protein sequence ID" value="AT1G58080.1"/>
    <property type="gene ID" value="AT1G58080"/>
</dbReference>
<dbReference type="GeneID" id="842175"/>
<dbReference type="Gramene" id="AT1G58080.1">
    <property type="protein sequence ID" value="AT1G58080.1"/>
    <property type="gene ID" value="AT1G58080"/>
</dbReference>
<dbReference type="KEGG" id="ath:AT1G58080"/>
<dbReference type="Araport" id="AT1G58080"/>
<dbReference type="TAIR" id="AT1G58080">
    <property type="gene designation" value="ATP-PRT1"/>
</dbReference>
<dbReference type="eggNOG" id="KOG2831">
    <property type="taxonomic scope" value="Eukaryota"/>
</dbReference>
<dbReference type="HOGENOM" id="CLU_038115_0_0_1"/>
<dbReference type="InParanoid" id="Q9S762"/>
<dbReference type="OMA" id="PRWGQLM"/>
<dbReference type="PhylomeDB" id="Q9S762"/>
<dbReference type="BioCyc" id="MetaCyc:AT1G58080-MONOMER"/>
<dbReference type="BRENDA" id="2.4.2.17">
    <property type="organism ID" value="399"/>
</dbReference>
<dbReference type="SABIO-RK" id="Q9S762"/>
<dbReference type="UniPathway" id="UPA00031">
    <property type="reaction ID" value="UER00006"/>
</dbReference>
<dbReference type="PRO" id="PR:Q9S762"/>
<dbReference type="Proteomes" id="UP000006548">
    <property type="component" value="Chromosome 1"/>
</dbReference>
<dbReference type="ExpressionAtlas" id="Q9S762">
    <property type="expression patterns" value="baseline and differential"/>
</dbReference>
<dbReference type="GO" id="GO:0009507">
    <property type="term" value="C:chloroplast"/>
    <property type="evidence" value="ECO:0007005"/>
    <property type="project" value="TAIR"/>
</dbReference>
<dbReference type="GO" id="GO:0009570">
    <property type="term" value="C:chloroplast stroma"/>
    <property type="evidence" value="ECO:0007005"/>
    <property type="project" value="TAIR"/>
</dbReference>
<dbReference type="GO" id="GO:0003879">
    <property type="term" value="F:ATP phosphoribosyltransferase activity"/>
    <property type="evidence" value="ECO:0000314"/>
    <property type="project" value="TAIR"/>
</dbReference>
<dbReference type="GO" id="GO:0000287">
    <property type="term" value="F:magnesium ion binding"/>
    <property type="evidence" value="ECO:0007669"/>
    <property type="project" value="InterPro"/>
</dbReference>
<dbReference type="GO" id="GO:0000105">
    <property type="term" value="P:L-histidine biosynthetic process"/>
    <property type="evidence" value="ECO:0000314"/>
    <property type="project" value="TAIR"/>
</dbReference>
<dbReference type="CDD" id="cd13593">
    <property type="entry name" value="PBP2_HisGL3"/>
    <property type="match status" value="1"/>
</dbReference>
<dbReference type="FunFam" id="3.40.190.10:FF:000118">
    <property type="entry name" value="ATP phosphoribosyltransferase 2, chloroplastic"/>
    <property type="match status" value="1"/>
</dbReference>
<dbReference type="FunFam" id="3.30.70.120:FF:000007">
    <property type="entry name" value="ATP phosphoribosyltransferase, chloroplastic"/>
    <property type="match status" value="1"/>
</dbReference>
<dbReference type="Gene3D" id="3.30.70.120">
    <property type="match status" value="1"/>
</dbReference>
<dbReference type="Gene3D" id="3.40.190.10">
    <property type="entry name" value="Periplasmic binding protein-like II"/>
    <property type="match status" value="2"/>
</dbReference>
<dbReference type="InterPro" id="IPR013820">
    <property type="entry name" value="ATP_PRibTrfase_cat"/>
</dbReference>
<dbReference type="InterPro" id="IPR018198">
    <property type="entry name" value="ATP_PRibTrfase_CS"/>
</dbReference>
<dbReference type="InterPro" id="IPR001348">
    <property type="entry name" value="ATP_PRibTrfase_HisG"/>
</dbReference>
<dbReference type="InterPro" id="IPR013115">
    <property type="entry name" value="HisG_C"/>
</dbReference>
<dbReference type="InterPro" id="IPR011322">
    <property type="entry name" value="N-reg_PII-like_a/b"/>
</dbReference>
<dbReference type="InterPro" id="IPR015867">
    <property type="entry name" value="N-reg_PII/ATP_PRibTrfase_C"/>
</dbReference>
<dbReference type="NCBIfam" id="TIGR00070">
    <property type="entry name" value="hisG"/>
    <property type="match status" value="1"/>
</dbReference>
<dbReference type="NCBIfam" id="TIGR03455">
    <property type="entry name" value="HisG_C-term"/>
    <property type="match status" value="1"/>
</dbReference>
<dbReference type="PANTHER" id="PTHR21403:SF7">
    <property type="entry name" value="ATP PHOSPHORIBOSYLTRANSFERASE 1, CHLOROPLASTIC"/>
    <property type="match status" value="1"/>
</dbReference>
<dbReference type="PANTHER" id="PTHR21403">
    <property type="entry name" value="ATP PHOSPHORIBOSYLTRANSFERASE ATP-PRTASE"/>
    <property type="match status" value="1"/>
</dbReference>
<dbReference type="Pfam" id="PF01634">
    <property type="entry name" value="HisG"/>
    <property type="match status" value="1"/>
</dbReference>
<dbReference type="Pfam" id="PF08029">
    <property type="entry name" value="HisG_C"/>
    <property type="match status" value="1"/>
</dbReference>
<dbReference type="SUPFAM" id="SSF54913">
    <property type="entry name" value="GlnB-like"/>
    <property type="match status" value="1"/>
</dbReference>
<dbReference type="SUPFAM" id="SSF53850">
    <property type="entry name" value="Periplasmic binding protein-like II"/>
    <property type="match status" value="1"/>
</dbReference>
<dbReference type="PROSITE" id="PS01316">
    <property type="entry name" value="ATP_P_PHORIBOSYLTR"/>
    <property type="match status" value="1"/>
</dbReference>
<proteinExistence type="evidence at protein level"/>
<organism>
    <name type="scientific">Arabidopsis thaliana</name>
    <name type="common">Mouse-ear cress</name>
    <dbReference type="NCBI Taxonomy" id="3702"/>
    <lineage>
        <taxon>Eukaryota</taxon>
        <taxon>Viridiplantae</taxon>
        <taxon>Streptophyta</taxon>
        <taxon>Embryophyta</taxon>
        <taxon>Tracheophyta</taxon>
        <taxon>Spermatophyta</taxon>
        <taxon>Magnoliopsida</taxon>
        <taxon>eudicotyledons</taxon>
        <taxon>Gunneridae</taxon>
        <taxon>Pentapetalae</taxon>
        <taxon>rosids</taxon>
        <taxon>malvids</taxon>
        <taxon>Brassicales</taxon>
        <taxon>Brassicaceae</taxon>
        <taxon>Camelineae</taxon>
        <taxon>Arabidopsis</taxon>
    </lineage>
</organism>
<evidence type="ECO:0000250" key="1"/>
<evidence type="ECO:0000256" key="2">
    <source>
        <dbReference type="SAM" id="MobiDB-lite"/>
    </source>
</evidence>
<evidence type="ECO:0000269" key="3">
    <source>
    </source>
</evidence>
<evidence type="ECO:0000305" key="4"/>
<evidence type="ECO:0007744" key="5">
    <source>
    </source>
</evidence>
<protein>
    <recommendedName>
        <fullName>ATP phosphoribosyltransferase 1, chloroplastic</fullName>
        <shortName>ATP-PRTase 1</shortName>
        <shortName>AtATP-PRT1</shortName>
        <ecNumber>2.4.2.17</ecNumber>
    </recommendedName>
</protein>
<name>HIS1A_ARATH</name>
<gene>
    <name type="primary">HISN1A</name>
    <name type="ordered locus">At1g58080</name>
    <name type="ORF">T15M6.9</name>
</gene>
<sequence length="411" mass="44556">MSLLLPTNLQQYPSSSSFPSSTPILSPPPSTAFSVIVPRRRCLRLVTSCVSTVQSSVATNGSSPAPAPAAVVVERDQIRLGLPSKGRMAADAIDLLKDCQLFVKQVNPRQYVAQIPQLPNTEVWFQRPKDIVRKLLSGDLDLGIVGLDTLSEYGQENEDLIIVHEALNFGDCHLSIAIPNYGIFENINSLKELAQMPQWSEERPLRLATGFTYLGPKFMKENGIKHVVFSTADGALEAAPAMGIADAILDLVSSGITLKENNLKEIEGGVVLESQAALVASRRALNERKGALNTVHEILERLEAHLKADGQFTVVANMRGNSAQEVAERVLSQPSLSGLQGPTISPVYCTQNGKVSVDYYAIVICVPKKALYDSVKQLRAAGGSGVLVSPLTYIFDEDTPRWGQLLRNLGI</sequence>
<feature type="transit peptide" description="Chloroplast" evidence="5">
    <location>
        <begin position="1"/>
        <end position="49"/>
    </location>
</feature>
<feature type="chain" id="PRO_0000422873" description="ATP phosphoribosyltransferase 1, chloroplastic">
    <location>
        <begin position="50"/>
        <end position="411"/>
    </location>
</feature>
<feature type="region of interest" description="Disordered" evidence="2">
    <location>
        <begin position="1"/>
        <end position="27"/>
    </location>
</feature>
<feature type="compositionally biased region" description="Polar residues" evidence="2">
    <location>
        <begin position="1"/>
        <end position="12"/>
    </location>
</feature>
<feature type="compositionally biased region" description="Low complexity" evidence="2">
    <location>
        <begin position="13"/>
        <end position="24"/>
    </location>
</feature>
<feature type="modified residue" description="N-acetylvaline" evidence="5">
    <location>
        <position position="50"/>
    </location>
</feature>
<reference key="1">
    <citation type="journal article" date="2000" name="Plant Physiol.">
        <title>Molecular cloning and characterization of ATP-phosphoribosyl transferase from Arabidopsis, a key enzyme in the histidine biosynthetic pathway.</title>
        <authorList>
            <person name="Ohta D."/>
            <person name="Fujimori K."/>
            <person name="Mizutani M."/>
            <person name="Nakayama Y."/>
            <person name="Kunpaisal-Hashimoto R."/>
            <person name="Munzer S."/>
            <person name="Kozaki A."/>
        </authorList>
    </citation>
    <scope>NUCLEOTIDE SEQUENCE [GENOMIC DNA / MRNA]</scope>
    <scope>CATALYTIC ACTIVITY</scope>
    <scope>BIOPHYSICOCHEMICAL PROPERTIES</scope>
    <scope>TISSUE SPECIFICITY</scope>
</reference>
<reference key="2">
    <citation type="journal article" date="2000" name="Nature">
        <title>Sequence and analysis of chromosome 1 of the plant Arabidopsis thaliana.</title>
        <authorList>
            <person name="Theologis A."/>
            <person name="Ecker J.R."/>
            <person name="Palm C.J."/>
            <person name="Federspiel N.A."/>
            <person name="Kaul S."/>
            <person name="White O."/>
            <person name="Alonso J."/>
            <person name="Altafi H."/>
            <person name="Araujo R."/>
            <person name="Bowman C.L."/>
            <person name="Brooks S.Y."/>
            <person name="Buehler E."/>
            <person name="Chan A."/>
            <person name="Chao Q."/>
            <person name="Chen H."/>
            <person name="Cheuk R.F."/>
            <person name="Chin C.W."/>
            <person name="Chung M.K."/>
            <person name="Conn L."/>
            <person name="Conway A.B."/>
            <person name="Conway A.R."/>
            <person name="Creasy T.H."/>
            <person name="Dewar K."/>
            <person name="Dunn P."/>
            <person name="Etgu P."/>
            <person name="Feldblyum T.V."/>
            <person name="Feng J.-D."/>
            <person name="Fong B."/>
            <person name="Fujii C.Y."/>
            <person name="Gill J.E."/>
            <person name="Goldsmith A.D."/>
            <person name="Haas B."/>
            <person name="Hansen N.F."/>
            <person name="Hughes B."/>
            <person name="Huizar L."/>
            <person name="Hunter J.L."/>
            <person name="Jenkins J."/>
            <person name="Johnson-Hopson C."/>
            <person name="Khan S."/>
            <person name="Khaykin E."/>
            <person name="Kim C.J."/>
            <person name="Koo H.L."/>
            <person name="Kremenetskaia I."/>
            <person name="Kurtz D.B."/>
            <person name="Kwan A."/>
            <person name="Lam B."/>
            <person name="Langin-Hooper S."/>
            <person name="Lee A."/>
            <person name="Lee J.M."/>
            <person name="Lenz C.A."/>
            <person name="Li J.H."/>
            <person name="Li Y.-P."/>
            <person name="Lin X."/>
            <person name="Liu S.X."/>
            <person name="Liu Z.A."/>
            <person name="Luros J.S."/>
            <person name="Maiti R."/>
            <person name="Marziali A."/>
            <person name="Militscher J."/>
            <person name="Miranda M."/>
            <person name="Nguyen M."/>
            <person name="Nierman W.C."/>
            <person name="Osborne B.I."/>
            <person name="Pai G."/>
            <person name="Peterson J."/>
            <person name="Pham P.K."/>
            <person name="Rizzo M."/>
            <person name="Rooney T."/>
            <person name="Rowley D."/>
            <person name="Sakano H."/>
            <person name="Salzberg S.L."/>
            <person name="Schwartz J.R."/>
            <person name="Shinn P."/>
            <person name="Southwick A.M."/>
            <person name="Sun H."/>
            <person name="Tallon L.J."/>
            <person name="Tambunga G."/>
            <person name="Toriumi M.J."/>
            <person name="Town C.D."/>
            <person name="Utterback T."/>
            <person name="Van Aken S."/>
            <person name="Vaysberg M."/>
            <person name="Vysotskaia V.S."/>
            <person name="Walker M."/>
            <person name="Wu D."/>
            <person name="Yu G."/>
            <person name="Fraser C.M."/>
            <person name="Venter J.C."/>
            <person name="Davis R.W."/>
        </authorList>
    </citation>
    <scope>NUCLEOTIDE SEQUENCE [LARGE SCALE GENOMIC DNA]</scope>
    <source>
        <strain>cv. Columbia</strain>
    </source>
</reference>
<reference key="3">
    <citation type="journal article" date="2017" name="Plant J.">
        <title>Araport11: a complete reannotation of the Arabidopsis thaliana reference genome.</title>
        <authorList>
            <person name="Cheng C.Y."/>
            <person name="Krishnakumar V."/>
            <person name="Chan A.P."/>
            <person name="Thibaud-Nissen F."/>
            <person name="Schobel S."/>
            <person name="Town C.D."/>
        </authorList>
    </citation>
    <scope>GENOME REANNOTATION</scope>
    <source>
        <strain>cv. Columbia</strain>
    </source>
</reference>
<reference key="4">
    <citation type="journal article" date="2003" name="Science">
        <title>Empirical analysis of transcriptional activity in the Arabidopsis genome.</title>
        <authorList>
            <person name="Yamada K."/>
            <person name="Lim J."/>
            <person name="Dale J.M."/>
            <person name="Chen H."/>
            <person name="Shinn P."/>
            <person name="Palm C.J."/>
            <person name="Southwick A.M."/>
            <person name="Wu H.C."/>
            <person name="Kim C.J."/>
            <person name="Nguyen M."/>
            <person name="Pham P.K."/>
            <person name="Cheuk R.F."/>
            <person name="Karlin-Newmann G."/>
            <person name="Liu S.X."/>
            <person name="Lam B."/>
            <person name="Sakano H."/>
            <person name="Wu T."/>
            <person name="Yu G."/>
            <person name="Miranda M."/>
            <person name="Quach H.L."/>
            <person name="Tripp M."/>
            <person name="Chang C.H."/>
            <person name="Lee J.M."/>
            <person name="Toriumi M.J."/>
            <person name="Chan M.M."/>
            <person name="Tang C.C."/>
            <person name="Onodera C.S."/>
            <person name="Deng J.M."/>
            <person name="Akiyama K."/>
            <person name="Ansari Y."/>
            <person name="Arakawa T."/>
            <person name="Banh J."/>
            <person name="Banno F."/>
            <person name="Bowser L."/>
            <person name="Brooks S.Y."/>
            <person name="Carninci P."/>
            <person name="Chao Q."/>
            <person name="Choy N."/>
            <person name="Enju A."/>
            <person name="Goldsmith A.D."/>
            <person name="Gurjal M."/>
            <person name="Hansen N.F."/>
            <person name="Hayashizaki Y."/>
            <person name="Johnson-Hopson C."/>
            <person name="Hsuan V.W."/>
            <person name="Iida K."/>
            <person name="Karnes M."/>
            <person name="Khan S."/>
            <person name="Koesema E."/>
            <person name="Ishida J."/>
            <person name="Jiang P.X."/>
            <person name="Jones T."/>
            <person name="Kawai J."/>
            <person name="Kamiya A."/>
            <person name="Meyers C."/>
            <person name="Nakajima M."/>
            <person name="Narusaka M."/>
            <person name="Seki M."/>
            <person name="Sakurai T."/>
            <person name="Satou M."/>
            <person name="Tamse R."/>
            <person name="Vaysberg M."/>
            <person name="Wallender E.K."/>
            <person name="Wong C."/>
            <person name="Yamamura Y."/>
            <person name="Yuan S."/>
            <person name="Shinozaki K."/>
            <person name="Davis R.W."/>
            <person name="Theologis A."/>
            <person name="Ecker J.R."/>
        </authorList>
    </citation>
    <scope>NUCLEOTIDE SEQUENCE [LARGE SCALE MRNA]</scope>
    <source>
        <strain>cv. Columbia</strain>
    </source>
</reference>
<reference key="5">
    <citation type="journal article" date="2006" name="Amino Acids">
        <title>Histidine biosynthesis in plants.</title>
        <authorList>
            <person name="Stepansky A."/>
            <person name="Leustek T."/>
        </authorList>
    </citation>
    <scope>GENE FAMILY</scope>
    <scope>NOMENCLATURE</scope>
</reference>
<reference key="6">
    <citation type="journal article" date="2007" name="Plant Physiol.">
        <title>Genetic dissection of histidine biosynthesis in Arabidopsis.</title>
        <authorList>
            <person name="Muralla R."/>
            <person name="Sweeney C."/>
            <person name="Stepansky A."/>
            <person name="Leustek T."/>
            <person name="Meinke D."/>
        </authorList>
    </citation>
    <scope>GENE FAMILY</scope>
    <scope>NOMENCLATURE</scope>
</reference>
<reference key="7">
    <citation type="journal article" date="2012" name="Mol. Cell. Proteomics">
        <title>Comparative large-scale characterisation of plant vs. mammal proteins reveals similar and idiosyncratic N-alpha acetylation features.</title>
        <authorList>
            <person name="Bienvenut W.V."/>
            <person name="Sumpton D."/>
            <person name="Martinez A."/>
            <person name="Lilla S."/>
            <person name="Espagne C."/>
            <person name="Meinnel T."/>
            <person name="Giglione C."/>
        </authorList>
    </citation>
    <scope>ACETYLATION [LARGE SCALE ANALYSIS] AT VAL-50</scope>
    <scope>CLEAVAGE OF TRANSIT PEPTIDE [LARGE SCALE ANALYSIS] AFTER CYS-49</scope>
    <scope>IDENTIFICATION BY MASS SPECTROMETRY [LARGE SCALE ANALYSIS]</scope>
</reference>